<comment type="function">
    <text evidence="1">Chaperone involved in the maturation of iron-sulfur cluster-containing proteins. Has a low intrinsic ATPase activity which is markedly stimulated by HscB.</text>
</comment>
<comment type="similarity">
    <text evidence="1">Belongs to the heat shock protein 70 family.</text>
</comment>
<gene>
    <name evidence="1" type="primary">hscA</name>
    <name type="ordered locus">VF_0621</name>
</gene>
<evidence type="ECO:0000255" key="1">
    <source>
        <dbReference type="HAMAP-Rule" id="MF_00679"/>
    </source>
</evidence>
<keyword id="KW-0067">ATP-binding</keyword>
<keyword id="KW-0143">Chaperone</keyword>
<keyword id="KW-0547">Nucleotide-binding</keyword>
<keyword id="KW-1185">Reference proteome</keyword>
<dbReference type="EMBL" id="CP000020">
    <property type="protein sequence ID" value="AAW85116.1"/>
    <property type="molecule type" value="Genomic_DNA"/>
</dbReference>
<dbReference type="RefSeq" id="WP_011261362.1">
    <property type="nucleotide sequence ID" value="NC_006840.2"/>
</dbReference>
<dbReference type="RefSeq" id="YP_204004.1">
    <property type="nucleotide sequence ID" value="NC_006840.2"/>
</dbReference>
<dbReference type="SMR" id="Q5E780"/>
<dbReference type="STRING" id="312309.VF_0621"/>
<dbReference type="EnsemblBacteria" id="AAW85116">
    <property type="protein sequence ID" value="AAW85116"/>
    <property type="gene ID" value="VF_0621"/>
</dbReference>
<dbReference type="GeneID" id="54163274"/>
<dbReference type="KEGG" id="vfi:VF_0621"/>
<dbReference type="PATRIC" id="fig|312309.11.peg.613"/>
<dbReference type="eggNOG" id="COG0443">
    <property type="taxonomic scope" value="Bacteria"/>
</dbReference>
<dbReference type="HOGENOM" id="CLU_005965_2_1_6"/>
<dbReference type="OrthoDB" id="9766019at2"/>
<dbReference type="Proteomes" id="UP000000537">
    <property type="component" value="Chromosome I"/>
</dbReference>
<dbReference type="GO" id="GO:0005524">
    <property type="term" value="F:ATP binding"/>
    <property type="evidence" value="ECO:0007669"/>
    <property type="project" value="UniProtKB-KW"/>
</dbReference>
<dbReference type="GO" id="GO:0016887">
    <property type="term" value="F:ATP hydrolysis activity"/>
    <property type="evidence" value="ECO:0007669"/>
    <property type="project" value="UniProtKB-UniRule"/>
</dbReference>
<dbReference type="GO" id="GO:0140662">
    <property type="term" value="F:ATP-dependent protein folding chaperone"/>
    <property type="evidence" value="ECO:0007669"/>
    <property type="project" value="InterPro"/>
</dbReference>
<dbReference type="GO" id="GO:0051082">
    <property type="term" value="F:unfolded protein binding"/>
    <property type="evidence" value="ECO:0007669"/>
    <property type="project" value="InterPro"/>
</dbReference>
<dbReference type="GO" id="GO:0016226">
    <property type="term" value="P:iron-sulfur cluster assembly"/>
    <property type="evidence" value="ECO:0007669"/>
    <property type="project" value="InterPro"/>
</dbReference>
<dbReference type="CDD" id="cd10236">
    <property type="entry name" value="ASKHA_NBD_HSP70_HscA"/>
    <property type="match status" value="1"/>
</dbReference>
<dbReference type="FunFam" id="3.30.420.40:FF:000046">
    <property type="entry name" value="Chaperone protein HscA"/>
    <property type="match status" value="1"/>
</dbReference>
<dbReference type="FunFam" id="2.60.34.10:FF:000005">
    <property type="entry name" value="Chaperone protein HscA homolog"/>
    <property type="match status" value="1"/>
</dbReference>
<dbReference type="FunFam" id="3.30.420.40:FF:000020">
    <property type="entry name" value="Chaperone protein HscA homolog"/>
    <property type="match status" value="1"/>
</dbReference>
<dbReference type="Gene3D" id="1.20.1270.10">
    <property type="match status" value="1"/>
</dbReference>
<dbReference type="Gene3D" id="3.30.420.40">
    <property type="match status" value="2"/>
</dbReference>
<dbReference type="Gene3D" id="3.90.640.10">
    <property type="entry name" value="Actin, Chain A, domain 4"/>
    <property type="match status" value="1"/>
</dbReference>
<dbReference type="Gene3D" id="2.60.34.10">
    <property type="entry name" value="Substrate Binding Domain Of DNAk, Chain A, domain 1"/>
    <property type="match status" value="1"/>
</dbReference>
<dbReference type="HAMAP" id="MF_00679">
    <property type="entry name" value="HscA"/>
    <property type="match status" value="1"/>
</dbReference>
<dbReference type="InterPro" id="IPR043129">
    <property type="entry name" value="ATPase_NBD"/>
</dbReference>
<dbReference type="InterPro" id="IPR018181">
    <property type="entry name" value="Heat_shock_70_CS"/>
</dbReference>
<dbReference type="InterPro" id="IPR042039">
    <property type="entry name" value="HscA_NBD"/>
</dbReference>
<dbReference type="InterPro" id="IPR029048">
    <property type="entry name" value="HSP70_C_sf"/>
</dbReference>
<dbReference type="InterPro" id="IPR029047">
    <property type="entry name" value="HSP70_peptide-bd_sf"/>
</dbReference>
<dbReference type="InterPro" id="IPR013126">
    <property type="entry name" value="Hsp_70_fam"/>
</dbReference>
<dbReference type="InterPro" id="IPR010236">
    <property type="entry name" value="ISC_FeS_clus_asmbl_HscA"/>
</dbReference>
<dbReference type="NCBIfam" id="TIGR01991">
    <property type="entry name" value="HscA"/>
    <property type="match status" value="1"/>
</dbReference>
<dbReference type="NCBIfam" id="NF003520">
    <property type="entry name" value="PRK05183.1"/>
    <property type="match status" value="1"/>
</dbReference>
<dbReference type="PANTHER" id="PTHR19375">
    <property type="entry name" value="HEAT SHOCK PROTEIN 70KDA"/>
    <property type="match status" value="1"/>
</dbReference>
<dbReference type="Pfam" id="PF00012">
    <property type="entry name" value="HSP70"/>
    <property type="match status" value="1"/>
</dbReference>
<dbReference type="PRINTS" id="PR00301">
    <property type="entry name" value="HEATSHOCK70"/>
</dbReference>
<dbReference type="SUPFAM" id="SSF53067">
    <property type="entry name" value="Actin-like ATPase domain"/>
    <property type="match status" value="2"/>
</dbReference>
<dbReference type="SUPFAM" id="SSF100934">
    <property type="entry name" value="Heat shock protein 70kD (HSP70), C-terminal subdomain"/>
    <property type="match status" value="1"/>
</dbReference>
<dbReference type="SUPFAM" id="SSF100920">
    <property type="entry name" value="Heat shock protein 70kD (HSP70), peptide-binding domain"/>
    <property type="match status" value="1"/>
</dbReference>
<dbReference type="PROSITE" id="PS00297">
    <property type="entry name" value="HSP70_1"/>
    <property type="match status" value="1"/>
</dbReference>
<dbReference type="PROSITE" id="PS00329">
    <property type="entry name" value="HSP70_2"/>
    <property type="match status" value="1"/>
</dbReference>
<proteinExistence type="inferred from homology"/>
<reference key="1">
    <citation type="journal article" date="2005" name="Proc. Natl. Acad. Sci. U.S.A.">
        <title>Complete genome sequence of Vibrio fischeri: a symbiotic bacterium with pathogenic congeners.</title>
        <authorList>
            <person name="Ruby E.G."/>
            <person name="Urbanowski M."/>
            <person name="Campbell J."/>
            <person name="Dunn A."/>
            <person name="Faini M."/>
            <person name="Gunsalus R."/>
            <person name="Lostroh P."/>
            <person name="Lupp C."/>
            <person name="McCann J."/>
            <person name="Millikan D."/>
            <person name="Schaefer A."/>
            <person name="Stabb E."/>
            <person name="Stevens A."/>
            <person name="Visick K."/>
            <person name="Whistler C."/>
            <person name="Greenberg E.P."/>
        </authorList>
    </citation>
    <scope>NUCLEOTIDE SEQUENCE [LARGE SCALE GENOMIC DNA]</scope>
    <source>
        <strain>ATCC 700601 / ES114</strain>
    </source>
</reference>
<feature type="chain" id="PRO_0000078652" description="Chaperone protein HscA homolog">
    <location>
        <begin position="1"/>
        <end position="616"/>
    </location>
</feature>
<protein>
    <recommendedName>
        <fullName evidence="1">Chaperone protein HscA homolog</fullName>
    </recommendedName>
</protein>
<organism>
    <name type="scientific">Aliivibrio fischeri (strain ATCC 700601 / ES114)</name>
    <name type="common">Vibrio fischeri</name>
    <dbReference type="NCBI Taxonomy" id="312309"/>
    <lineage>
        <taxon>Bacteria</taxon>
        <taxon>Pseudomonadati</taxon>
        <taxon>Pseudomonadota</taxon>
        <taxon>Gammaproteobacteria</taxon>
        <taxon>Vibrionales</taxon>
        <taxon>Vibrionaceae</taxon>
        <taxon>Aliivibrio</taxon>
    </lineage>
</organism>
<name>HSCA_ALIF1</name>
<sequence length="616" mass="65955">MLLQIAEPGQSAVPHQHKLAVGIDLGTTNSLVASVRSGEAKTLPDMKGNVILPSVVQYQEDKICVGMNAYQSAAMDPQNTIISVKRLMGRSLKDIQARYPELPYQFSESENGLPVIQTAQGEVNPIQVSSEILKSLSRRAQDTLGGELEGVVITVPAYFDDAQRAGTKDAATLAGLNVLRLLNEPTAAAIAYGLDSGQEGVIAVYDLGGGTFDISILRLSKGVFEVLATGGDSALGGDDFDHVLAQWIKEQAGITSPLSSQEQRELLTLATQTKVALSDSDNVKISFKDWSGEISVELFNSLIQPLIKKTLMACRRALKDADITSEEVMEVVMVGGSTRTPFVRTSVGDYFGQTPLTSIDPDQVVAIGAAIQADILVGNKPDSEMLLLDVIPLSLGIETMGGLVEKIIPRNTTIPVAKAQEFTTFKDGQTGMMVHVVQGEREMVEDGRSLARFSLKGIPPMAAGAAHIRVTYQVDADGLLSVTAMEKSTGVQSHIQVKPSYGLSDNEVANMLKDSMTYAKEDMKARALAEQQVEADRVIEGLVVALNNDGDALLSKEEQAEILQAIEALITLRQGTDAQAIEDGIKKADEASQEFAARRMDASIRAALAGQSIDEV</sequence>
<accession>Q5E780</accession>